<gene>
    <name type="primary">Cadm2</name>
    <name type="synonym">Igsf4d</name>
    <name type="synonym">Necl3</name>
</gene>
<keyword id="KW-0025">Alternative splicing</keyword>
<keyword id="KW-0130">Cell adhesion</keyword>
<keyword id="KW-1003">Cell membrane</keyword>
<keyword id="KW-0966">Cell projection</keyword>
<keyword id="KW-0903">Direct protein sequencing</keyword>
<keyword id="KW-1015">Disulfide bond</keyword>
<keyword id="KW-0325">Glycoprotein</keyword>
<keyword id="KW-0393">Immunoglobulin domain</keyword>
<keyword id="KW-0472">Membrane</keyword>
<keyword id="KW-0597">Phosphoprotein</keyword>
<keyword id="KW-1185">Reference proteome</keyword>
<keyword id="KW-0677">Repeat</keyword>
<keyword id="KW-0732">Signal</keyword>
<keyword id="KW-0770">Synapse</keyword>
<keyword id="KW-0812">Transmembrane</keyword>
<keyword id="KW-1133">Transmembrane helix</keyword>
<feature type="signal peptide" evidence="2">
    <location>
        <begin position="1"/>
        <end position="24"/>
    </location>
</feature>
<feature type="chain" id="PRO_0000291972" description="Cell adhesion molecule 2">
    <location>
        <begin position="25"/>
        <end position="435"/>
    </location>
</feature>
<feature type="topological domain" description="Extracellular" evidence="2">
    <location>
        <begin position="25"/>
        <end position="367"/>
    </location>
</feature>
<feature type="transmembrane region" description="Helical" evidence="2">
    <location>
        <begin position="368"/>
        <end position="388"/>
    </location>
</feature>
<feature type="topological domain" description="Cytoplasmic" evidence="2">
    <location>
        <begin position="389"/>
        <end position="435"/>
    </location>
</feature>
<feature type="domain" description="Ig-like V-type">
    <location>
        <begin position="27"/>
        <end position="119"/>
    </location>
</feature>
<feature type="domain" description="Ig-like C2-type 1">
    <location>
        <begin position="127"/>
        <end position="219"/>
    </location>
</feature>
<feature type="domain" description="Ig-like C2-type 2">
    <location>
        <begin position="227"/>
        <end position="312"/>
    </location>
</feature>
<feature type="region of interest" description="Disordered" evidence="4">
    <location>
        <begin position="341"/>
        <end position="360"/>
    </location>
</feature>
<feature type="compositionally biased region" description="Low complexity" evidence="4">
    <location>
        <begin position="341"/>
        <end position="351"/>
    </location>
</feature>
<feature type="modified residue" description="Phosphoserine" evidence="7">
    <location>
        <position position="423"/>
    </location>
</feature>
<feature type="glycosylation site" description="N-linked (GlcNAc...) asparagine" evidence="2">
    <location>
        <position position="31"/>
    </location>
</feature>
<feature type="glycosylation site" description="N-linked (GlcNAc...) asparagine" evidence="8">
    <location>
        <position position="51"/>
    </location>
</feature>
<feature type="glycosylation site" description="N-linked (GlcNAc...) asparagine" evidence="2">
    <location>
        <position position="291"/>
    </location>
</feature>
<feature type="disulfide bond" evidence="3">
    <location>
        <begin position="44"/>
        <end position="104"/>
    </location>
</feature>
<feature type="disulfide bond" evidence="3">
    <location>
        <begin position="146"/>
        <end position="203"/>
    </location>
</feature>
<feature type="disulfide bond" evidence="3">
    <location>
        <begin position="248"/>
        <end position="296"/>
    </location>
</feature>
<feature type="splice variant" id="VSP_026338" description="In isoform 2." evidence="5">
    <location>
        <begin position="315"/>
        <end position="354"/>
    </location>
</feature>
<feature type="sequence conflict" description="In Ref. 1; ABB85363." evidence="6" ref="1">
    <original>L</original>
    <variation>Q</variation>
    <location>
        <position position="20"/>
    </location>
</feature>
<protein>
    <recommendedName>
        <fullName>Cell adhesion molecule 2</fullName>
    </recommendedName>
    <alternativeName>
        <fullName>Immunoglobulin superfamily member 4D</fullName>
        <shortName>IgSF4D</shortName>
    </alternativeName>
    <alternativeName>
        <fullName>Nectin-like protein 3</fullName>
        <shortName>NECL-3</shortName>
    </alternativeName>
    <alternativeName>
        <fullName>Synaptic cell adhesion molecule 2</fullName>
        <shortName>SynCAM 2</shortName>
    </alternativeName>
</protein>
<organism>
    <name type="scientific">Rattus norvegicus</name>
    <name type="common">Rat</name>
    <dbReference type="NCBI Taxonomy" id="10116"/>
    <lineage>
        <taxon>Eukaryota</taxon>
        <taxon>Metazoa</taxon>
        <taxon>Chordata</taxon>
        <taxon>Craniata</taxon>
        <taxon>Vertebrata</taxon>
        <taxon>Euteleostomi</taxon>
        <taxon>Mammalia</taxon>
        <taxon>Eutheria</taxon>
        <taxon>Euarchontoglires</taxon>
        <taxon>Glires</taxon>
        <taxon>Rodentia</taxon>
        <taxon>Myomorpha</taxon>
        <taxon>Muroidea</taxon>
        <taxon>Muridae</taxon>
        <taxon>Murinae</taxon>
        <taxon>Rattus</taxon>
    </lineage>
</organism>
<name>CADM2_RAT</name>
<comment type="function">
    <text evidence="1">Adhesion molecule that engages in homo- and heterophilic interactions with the other nectin-like family members, leading to cell aggregation. Important for synapse organization, providing regulated trans-synaptic adhesion. Preferentially binds to oligodendrocytes (By similarity).</text>
</comment>
<comment type="subcellular location">
    <subcellularLocation>
        <location evidence="1">Cell membrane</location>
        <topology>Single-pass type I membrane protein</topology>
    </subcellularLocation>
    <subcellularLocation>
        <location evidence="1">Synapse</location>
    </subcellularLocation>
    <subcellularLocation>
        <location evidence="1">Cell projection</location>
        <location evidence="1">Axon</location>
    </subcellularLocation>
    <text evidence="1">Found in the axoplasm of myelinated axons.</text>
</comment>
<comment type="alternative products">
    <event type="alternative splicing"/>
    <isoform>
        <id>Q1WIM2-1</id>
        <name>1</name>
        <sequence type="displayed"/>
    </isoform>
    <isoform>
        <id>Q1WIM2-2</id>
        <name>2</name>
        <sequence type="described" ref="VSP_026338"/>
    </isoform>
</comment>
<comment type="PTM">
    <text evidence="1">Glycosylation at Asn-51 reduces adhesive binding.</text>
</comment>
<comment type="similarity">
    <text evidence="6">Belongs to the nectin family.</text>
</comment>
<sequence length="435" mass="47528">MIWKRSAVLRFYSVCGLLLLGSQGQFPLTQNVTVVEGGTAILTCRVDQNDNTSLQWSNPAQQTLYFDDKKALRDNRIELVRASWHELSISVSDVSLSDEGQYTCSLFTMPVKTSKAYLTVLGVPEKPQISGFSSPVMEGDLMQLTCKTSGSKPAADIRWFKNDKEIKDVKYLKEEDANRKTFTVSSTLDFRVDRSDDGVAVICRVDHESLNATPQVAMQVLEIHYTPSVKIIPSTPFPQEGQALTLTCESKGKPLPEPVLWTKDGAELPDPDRMVVSGRELNILFLNKTDNGTYRCEATNTIGQSSAEYVLIVHDVPNTLLPTTIIPSLTTAPVTTTVAITTSPSTSASSSSRRDPNSLAGQNGPDHALIGGIVAVVVFVTLCSIFLLGRYLARHKGTYLTNEAKGAEDAPDADTAIINAEGSQVNAEEKKEYFI</sequence>
<accession>Q1WIM2</accession>
<proteinExistence type="evidence at protein level"/>
<reference key="1">
    <citation type="submission" date="2005-11" db="EMBL/GenBank/DDBJ databases">
        <title>The nectin-like proteins: candidate cell adhesion molecules to mediate axo-glial interactions.</title>
        <authorList>
            <person name="Maurel P."/>
            <person name="Einheber S."/>
            <person name="Rubin M.B."/>
            <person name="Galinska J."/>
            <person name="Thaker P."/>
            <person name="Salzer J.L."/>
        </authorList>
    </citation>
    <scope>NUCLEOTIDE SEQUENCE [MRNA] (ISOFORM 2)</scope>
    <source>
        <strain>Sprague-Dawley</strain>
    </source>
</reference>
<reference key="2">
    <citation type="journal article" date="2004" name="Nature">
        <title>Genome sequence of the Brown Norway rat yields insights into mammalian evolution.</title>
        <authorList>
            <person name="Gibbs R.A."/>
            <person name="Weinstock G.M."/>
            <person name="Metzker M.L."/>
            <person name="Muzny D.M."/>
            <person name="Sodergren E.J."/>
            <person name="Scherer S."/>
            <person name="Scott G."/>
            <person name="Steffen D."/>
            <person name="Worley K.C."/>
            <person name="Burch P.E."/>
            <person name="Okwuonu G."/>
            <person name="Hines S."/>
            <person name="Lewis L."/>
            <person name="Deramo C."/>
            <person name="Delgado O."/>
            <person name="Dugan-Rocha S."/>
            <person name="Miner G."/>
            <person name="Morgan M."/>
            <person name="Hawes A."/>
            <person name="Gill R."/>
            <person name="Holt R.A."/>
            <person name="Adams M.D."/>
            <person name="Amanatides P.G."/>
            <person name="Baden-Tillson H."/>
            <person name="Barnstead M."/>
            <person name="Chin S."/>
            <person name="Evans C.A."/>
            <person name="Ferriera S."/>
            <person name="Fosler C."/>
            <person name="Glodek A."/>
            <person name="Gu Z."/>
            <person name="Jennings D."/>
            <person name="Kraft C.L."/>
            <person name="Nguyen T."/>
            <person name="Pfannkoch C.M."/>
            <person name="Sitter C."/>
            <person name="Sutton G.G."/>
            <person name="Venter J.C."/>
            <person name="Woodage T."/>
            <person name="Smith D."/>
            <person name="Lee H.-M."/>
            <person name="Gustafson E."/>
            <person name="Cahill P."/>
            <person name="Kana A."/>
            <person name="Doucette-Stamm L."/>
            <person name="Weinstock K."/>
            <person name="Fechtel K."/>
            <person name="Weiss R.B."/>
            <person name="Dunn D.M."/>
            <person name="Green E.D."/>
            <person name="Blakesley R.W."/>
            <person name="Bouffard G.G."/>
            <person name="De Jong P.J."/>
            <person name="Osoegawa K."/>
            <person name="Zhu B."/>
            <person name="Marra M."/>
            <person name="Schein J."/>
            <person name="Bosdet I."/>
            <person name="Fjell C."/>
            <person name="Jones S."/>
            <person name="Krzywinski M."/>
            <person name="Mathewson C."/>
            <person name="Siddiqui A."/>
            <person name="Wye N."/>
            <person name="McPherson J."/>
            <person name="Zhao S."/>
            <person name="Fraser C.M."/>
            <person name="Shetty J."/>
            <person name="Shatsman S."/>
            <person name="Geer K."/>
            <person name="Chen Y."/>
            <person name="Abramzon S."/>
            <person name="Nierman W.C."/>
            <person name="Havlak P.H."/>
            <person name="Chen R."/>
            <person name="Durbin K.J."/>
            <person name="Egan A."/>
            <person name="Ren Y."/>
            <person name="Song X.-Z."/>
            <person name="Li B."/>
            <person name="Liu Y."/>
            <person name="Qin X."/>
            <person name="Cawley S."/>
            <person name="Cooney A.J."/>
            <person name="D'Souza L.M."/>
            <person name="Martin K."/>
            <person name="Wu J.Q."/>
            <person name="Gonzalez-Garay M.L."/>
            <person name="Jackson A.R."/>
            <person name="Kalafus K.J."/>
            <person name="McLeod M.P."/>
            <person name="Milosavljevic A."/>
            <person name="Virk D."/>
            <person name="Volkov A."/>
            <person name="Wheeler D.A."/>
            <person name="Zhang Z."/>
            <person name="Bailey J.A."/>
            <person name="Eichler E.E."/>
            <person name="Tuzun E."/>
            <person name="Birney E."/>
            <person name="Mongin E."/>
            <person name="Ureta-Vidal A."/>
            <person name="Woodwark C."/>
            <person name="Zdobnov E."/>
            <person name="Bork P."/>
            <person name="Suyama M."/>
            <person name="Torrents D."/>
            <person name="Alexandersson M."/>
            <person name="Trask B.J."/>
            <person name="Young J.M."/>
            <person name="Huang H."/>
            <person name="Wang H."/>
            <person name="Xing H."/>
            <person name="Daniels S."/>
            <person name="Gietzen D."/>
            <person name="Schmidt J."/>
            <person name="Stevens K."/>
            <person name="Vitt U."/>
            <person name="Wingrove J."/>
            <person name="Camara F."/>
            <person name="Mar Alba M."/>
            <person name="Abril J.F."/>
            <person name="Guigo R."/>
            <person name="Smit A."/>
            <person name="Dubchak I."/>
            <person name="Rubin E.M."/>
            <person name="Couronne O."/>
            <person name="Poliakov A."/>
            <person name="Huebner N."/>
            <person name="Ganten D."/>
            <person name="Goesele C."/>
            <person name="Hummel O."/>
            <person name="Kreitler T."/>
            <person name="Lee Y.-A."/>
            <person name="Monti J."/>
            <person name="Schulz H."/>
            <person name="Zimdahl H."/>
            <person name="Himmelbauer H."/>
            <person name="Lehrach H."/>
            <person name="Jacob H.J."/>
            <person name="Bromberg S."/>
            <person name="Gullings-Handley J."/>
            <person name="Jensen-Seaman M.I."/>
            <person name="Kwitek A.E."/>
            <person name="Lazar J."/>
            <person name="Pasko D."/>
            <person name="Tonellato P.J."/>
            <person name="Twigger S."/>
            <person name="Ponting C.P."/>
            <person name="Duarte J.M."/>
            <person name="Rice S."/>
            <person name="Goodstadt L."/>
            <person name="Beatson S.A."/>
            <person name="Emes R.D."/>
            <person name="Winter E.E."/>
            <person name="Webber C."/>
            <person name="Brandt P."/>
            <person name="Nyakatura G."/>
            <person name="Adetobi M."/>
            <person name="Chiaromonte F."/>
            <person name="Elnitski L."/>
            <person name="Eswara P."/>
            <person name="Hardison R.C."/>
            <person name="Hou M."/>
            <person name="Kolbe D."/>
            <person name="Makova K."/>
            <person name="Miller W."/>
            <person name="Nekrutenko A."/>
            <person name="Riemer C."/>
            <person name="Schwartz S."/>
            <person name="Taylor J."/>
            <person name="Yang S."/>
            <person name="Zhang Y."/>
            <person name="Lindpaintner K."/>
            <person name="Andrews T.D."/>
            <person name="Caccamo M."/>
            <person name="Clamp M."/>
            <person name="Clarke L."/>
            <person name="Curwen V."/>
            <person name="Durbin R.M."/>
            <person name="Eyras E."/>
            <person name="Searle S.M."/>
            <person name="Cooper G.M."/>
            <person name="Batzoglou S."/>
            <person name="Brudno M."/>
            <person name="Sidow A."/>
            <person name="Stone E.A."/>
            <person name="Payseur B.A."/>
            <person name="Bourque G."/>
            <person name="Lopez-Otin C."/>
            <person name="Puente X.S."/>
            <person name="Chakrabarti K."/>
            <person name="Chatterji S."/>
            <person name="Dewey C."/>
            <person name="Pachter L."/>
            <person name="Bray N."/>
            <person name="Yap V.B."/>
            <person name="Caspi A."/>
            <person name="Tesler G."/>
            <person name="Pevzner P.A."/>
            <person name="Haussler D."/>
            <person name="Roskin K.M."/>
            <person name="Baertsch R."/>
            <person name="Clawson H."/>
            <person name="Furey T.S."/>
            <person name="Hinrichs A.S."/>
            <person name="Karolchik D."/>
            <person name="Kent W.J."/>
            <person name="Rosenbloom K.R."/>
            <person name="Trumbower H."/>
            <person name="Weirauch M."/>
            <person name="Cooper D.N."/>
            <person name="Stenson P.D."/>
            <person name="Ma B."/>
            <person name="Brent M."/>
            <person name="Arumugam M."/>
            <person name="Shteynberg D."/>
            <person name="Copley R.R."/>
            <person name="Taylor M.S."/>
            <person name="Riethman H."/>
            <person name="Mudunuri U."/>
            <person name="Peterson J."/>
            <person name="Guyer M."/>
            <person name="Felsenfeld A."/>
            <person name="Old S."/>
            <person name="Mockrin S."/>
            <person name="Collins F.S."/>
        </authorList>
    </citation>
    <scope>NUCLEOTIDE SEQUENCE [LARGE SCALE GENOMIC DNA]</scope>
    <source>
        <strain>Brown Norway</strain>
    </source>
</reference>
<reference key="3">
    <citation type="submission" date="2007-09" db="UniProtKB">
        <authorList>
            <person name="Lubec G."/>
            <person name="Kang S.U."/>
            <person name="Lubec S."/>
        </authorList>
    </citation>
    <scope>PROTEIN SEQUENCE OF 195-204 AND 231-273</scope>
    <scope>IDENTIFICATION BY MASS SPECTROMETRY</scope>
    <source>
        <strain>Sprague-Dawley</strain>
        <tissue>Brain</tissue>
    </source>
</reference>
<reference key="4">
    <citation type="journal article" date="2012" name="Nat. Commun.">
        <title>Quantitative maps of protein phosphorylation sites across 14 different rat organs and tissues.</title>
        <authorList>
            <person name="Lundby A."/>
            <person name="Secher A."/>
            <person name="Lage K."/>
            <person name="Nordsborg N.B."/>
            <person name="Dmytriyev A."/>
            <person name="Lundby C."/>
            <person name="Olsen J.V."/>
        </authorList>
    </citation>
    <scope>PHOSPHORYLATION [LARGE SCALE ANALYSIS] AT SER-423</scope>
    <scope>IDENTIFICATION BY MASS SPECTROMETRY [LARGE SCALE ANALYSIS]</scope>
</reference>
<reference key="5">
    <citation type="journal article" date="2013" name="J. Proteome Res.">
        <title>Site-specific glycan-peptide analysis for determination of N-glycoproteome heterogeneity.</title>
        <authorList>
            <person name="Parker B.L."/>
            <person name="Thaysen-Andersen M."/>
            <person name="Solis N."/>
            <person name="Scott N.E."/>
            <person name="Larsen M.R."/>
            <person name="Graham M.E."/>
            <person name="Packer N.H."/>
            <person name="Cordwell S.J."/>
        </authorList>
    </citation>
    <scope>GLYCOSYLATION [LARGE SCALE ANALYSIS] AT ASN-51</scope>
    <scope>IDENTIFICATION BY MASS SPECTROMETRY [LARGE SCALE ANALYSIS]</scope>
    <source>
        <tissue>Brain</tissue>
    </source>
</reference>
<evidence type="ECO:0000250" key="1"/>
<evidence type="ECO:0000255" key="2"/>
<evidence type="ECO:0000255" key="3">
    <source>
        <dbReference type="PROSITE-ProRule" id="PRU00114"/>
    </source>
</evidence>
<evidence type="ECO:0000256" key="4">
    <source>
        <dbReference type="SAM" id="MobiDB-lite"/>
    </source>
</evidence>
<evidence type="ECO:0000303" key="5">
    <source ref="1"/>
</evidence>
<evidence type="ECO:0000305" key="6"/>
<evidence type="ECO:0007744" key="7">
    <source>
    </source>
</evidence>
<evidence type="ECO:0007744" key="8">
    <source>
    </source>
</evidence>
<dbReference type="EMBL" id="DQ272744">
    <property type="protein sequence ID" value="ABB85363.1"/>
    <property type="molecule type" value="mRNA"/>
</dbReference>
<dbReference type="EMBL" id="AABR03079773">
    <property type="status" value="NOT_ANNOTATED_CDS"/>
    <property type="molecule type" value="Genomic_DNA"/>
</dbReference>
<dbReference type="EMBL" id="AABR03081486">
    <property type="status" value="NOT_ANNOTATED_CDS"/>
    <property type="molecule type" value="Genomic_DNA"/>
</dbReference>
<dbReference type="EMBL" id="AABR03078395">
    <property type="status" value="NOT_ANNOTATED_CDS"/>
    <property type="molecule type" value="Genomic_DNA"/>
</dbReference>
<dbReference type="EMBL" id="AABR03080530">
    <property type="status" value="NOT_ANNOTATED_CDS"/>
    <property type="molecule type" value="Genomic_DNA"/>
</dbReference>
<dbReference type="EMBL" id="AABR03080991">
    <property type="status" value="NOT_ANNOTATED_CDS"/>
    <property type="molecule type" value="Genomic_DNA"/>
</dbReference>
<dbReference type="EMBL" id="AABR03078776">
    <property type="status" value="NOT_ANNOTATED_CDS"/>
    <property type="molecule type" value="Genomic_DNA"/>
</dbReference>
<dbReference type="RefSeq" id="NP_001040567.1">
    <property type="nucleotide sequence ID" value="NM_001047102.1"/>
</dbReference>
<dbReference type="SMR" id="Q1WIM2"/>
<dbReference type="BioGRID" id="262128">
    <property type="interactions" value="1"/>
</dbReference>
<dbReference type="FunCoup" id="Q1WIM2">
    <property type="interactions" value="1899"/>
</dbReference>
<dbReference type="STRING" id="10116.ENSRNOP00000040899"/>
<dbReference type="GlyCosmos" id="Q1WIM2">
    <property type="glycosylation" value="4 sites, 15 glycans"/>
</dbReference>
<dbReference type="GlyGen" id="Q1WIM2">
    <property type="glycosylation" value="4 sites, 15 N-linked glycans (2 sites)"/>
</dbReference>
<dbReference type="iPTMnet" id="Q1WIM2"/>
<dbReference type="PhosphoSitePlus" id="Q1WIM2"/>
<dbReference type="PaxDb" id="10116-ENSRNOP00000040899"/>
<dbReference type="GeneID" id="360687"/>
<dbReference type="KEGG" id="rno:360687"/>
<dbReference type="UCSC" id="RGD:1305678">
    <molecule id="Q1WIM2-1"/>
    <property type="organism name" value="rat"/>
</dbReference>
<dbReference type="AGR" id="RGD:1305678"/>
<dbReference type="CTD" id="253559"/>
<dbReference type="RGD" id="1305678">
    <property type="gene designation" value="Cadm2"/>
</dbReference>
<dbReference type="eggNOG" id="ENOG502QV9X">
    <property type="taxonomic scope" value="Eukaryota"/>
</dbReference>
<dbReference type="InParanoid" id="Q1WIM2"/>
<dbReference type="PhylomeDB" id="Q1WIM2"/>
<dbReference type="TreeFam" id="TF326804"/>
<dbReference type="Reactome" id="R-RNO-418990">
    <property type="pathway name" value="Adherens junctions interactions"/>
</dbReference>
<dbReference type="PRO" id="PR:Q1WIM2"/>
<dbReference type="Proteomes" id="UP000002494">
    <property type="component" value="Unplaced"/>
</dbReference>
<dbReference type="GO" id="GO:0030424">
    <property type="term" value="C:axon"/>
    <property type="evidence" value="ECO:0000314"/>
    <property type="project" value="RGD"/>
</dbReference>
<dbReference type="GO" id="GO:0098982">
    <property type="term" value="C:GABA-ergic synapse"/>
    <property type="evidence" value="ECO:0000314"/>
    <property type="project" value="SynGO"/>
</dbReference>
<dbReference type="GO" id="GO:0098978">
    <property type="term" value="C:glutamatergic synapse"/>
    <property type="evidence" value="ECO:0000314"/>
    <property type="project" value="SynGO"/>
</dbReference>
<dbReference type="GO" id="GO:0032809">
    <property type="term" value="C:neuronal cell body membrane"/>
    <property type="evidence" value="ECO:0000314"/>
    <property type="project" value="RGD"/>
</dbReference>
<dbReference type="GO" id="GO:0045211">
    <property type="term" value="C:postsynaptic membrane"/>
    <property type="evidence" value="ECO:0000314"/>
    <property type="project" value="SynGO"/>
</dbReference>
<dbReference type="GO" id="GO:0007156">
    <property type="term" value="P:homophilic cell adhesion via plasma membrane adhesion molecules"/>
    <property type="evidence" value="ECO:0000318"/>
    <property type="project" value="GO_Central"/>
</dbReference>
<dbReference type="GO" id="GO:0099560">
    <property type="term" value="P:synaptic membrane adhesion"/>
    <property type="evidence" value="ECO:0000314"/>
    <property type="project" value="SynGO"/>
</dbReference>
<dbReference type="CDD" id="cd05884">
    <property type="entry name" value="IgI_2_Necl-3"/>
    <property type="match status" value="1"/>
</dbReference>
<dbReference type="CDD" id="cd07701">
    <property type="entry name" value="IgV_1_Necl-3"/>
    <property type="match status" value="1"/>
</dbReference>
<dbReference type="FunFam" id="2.60.40.10:FF:000013">
    <property type="entry name" value="cell adhesion molecule 1 isoform X1"/>
    <property type="match status" value="1"/>
</dbReference>
<dbReference type="FunFam" id="2.60.40.10:FF:000446">
    <property type="entry name" value="cell adhesion molecule 2 isoform X1"/>
    <property type="match status" value="1"/>
</dbReference>
<dbReference type="FunFam" id="2.60.40.10:FF:000449">
    <property type="entry name" value="cell adhesion molecule 2 isoform X1"/>
    <property type="match status" value="1"/>
</dbReference>
<dbReference type="Gene3D" id="2.60.40.10">
    <property type="entry name" value="Immunoglobulins"/>
    <property type="match status" value="3"/>
</dbReference>
<dbReference type="InterPro" id="IPR013162">
    <property type="entry name" value="CD80_C2-set"/>
</dbReference>
<dbReference type="InterPro" id="IPR007110">
    <property type="entry name" value="Ig-like_dom"/>
</dbReference>
<dbReference type="InterPro" id="IPR036179">
    <property type="entry name" value="Ig-like_dom_sf"/>
</dbReference>
<dbReference type="InterPro" id="IPR013783">
    <property type="entry name" value="Ig-like_fold"/>
</dbReference>
<dbReference type="InterPro" id="IPR003599">
    <property type="entry name" value="Ig_sub"/>
</dbReference>
<dbReference type="InterPro" id="IPR003598">
    <property type="entry name" value="Ig_sub2"/>
</dbReference>
<dbReference type="InterPro" id="IPR013106">
    <property type="entry name" value="Ig_V-set"/>
</dbReference>
<dbReference type="InterPro" id="IPR003585">
    <property type="entry name" value="Neurexin-like"/>
</dbReference>
<dbReference type="PANTHER" id="PTHR45889:SF1">
    <property type="entry name" value="CELL ADHESION MOLECULE 2"/>
    <property type="match status" value="1"/>
</dbReference>
<dbReference type="PANTHER" id="PTHR45889">
    <property type="entry name" value="IG-LIKE DOMAIN-CONTAINING PROTEIN"/>
    <property type="match status" value="1"/>
</dbReference>
<dbReference type="Pfam" id="PF08205">
    <property type="entry name" value="C2-set_2"/>
    <property type="match status" value="1"/>
</dbReference>
<dbReference type="Pfam" id="PF13927">
    <property type="entry name" value="Ig_3"/>
    <property type="match status" value="1"/>
</dbReference>
<dbReference type="Pfam" id="PF07686">
    <property type="entry name" value="V-set"/>
    <property type="match status" value="1"/>
</dbReference>
<dbReference type="SMART" id="SM00294">
    <property type="entry name" value="4.1m"/>
    <property type="match status" value="1"/>
</dbReference>
<dbReference type="SMART" id="SM00409">
    <property type="entry name" value="IG"/>
    <property type="match status" value="2"/>
</dbReference>
<dbReference type="SMART" id="SM00408">
    <property type="entry name" value="IGc2"/>
    <property type="match status" value="2"/>
</dbReference>
<dbReference type="SUPFAM" id="SSF48726">
    <property type="entry name" value="Immunoglobulin"/>
    <property type="match status" value="3"/>
</dbReference>
<dbReference type="PROSITE" id="PS50835">
    <property type="entry name" value="IG_LIKE"/>
    <property type="match status" value="3"/>
</dbReference>